<organism>
    <name type="scientific">Xenopus tropicalis</name>
    <name type="common">Western clawed frog</name>
    <name type="synonym">Silurana tropicalis</name>
    <dbReference type="NCBI Taxonomy" id="8364"/>
    <lineage>
        <taxon>Eukaryota</taxon>
        <taxon>Metazoa</taxon>
        <taxon>Chordata</taxon>
        <taxon>Craniata</taxon>
        <taxon>Vertebrata</taxon>
        <taxon>Euteleostomi</taxon>
        <taxon>Amphibia</taxon>
        <taxon>Batrachia</taxon>
        <taxon>Anura</taxon>
        <taxon>Pipoidea</taxon>
        <taxon>Pipidae</taxon>
        <taxon>Xenopodinae</taxon>
        <taxon>Xenopus</taxon>
        <taxon>Silurana</taxon>
    </lineage>
</organism>
<accession>Q6P1V8</accession>
<feature type="chain" id="PRO_0000235886" description="Zygotic DNA replication licensing factor mcm6">
    <location>
        <begin position="1"/>
        <end position="823"/>
    </location>
</feature>
<feature type="domain" description="MCM" evidence="3">
    <location>
        <begin position="347"/>
        <end position="554"/>
    </location>
</feature>
<feature type="zinc finger region" description="C4-type" evidence="3">
    <location>
        <begin position="159"/>
        <end position="186"/>
    </location>
</feature>
<feature type="region of interest" description="Disordered" evidence="4">
    <location>
        <begin position="666"/>
        <end position="713"/>
    </location>
</feature>
<feature type="short sequence motif" description="Arginine finger">
    <location>
        <begin position="529"/>
        <end position="532"/>
    </location>
</feature>
<feature type="compositionally biased region" description="Acidic residues" evidence="4">
    <location>
        <begin position="667"/>
        <end position="680"/>
    </location>
</feature>
<feature type="compositionally biased region" description="Low complexity" evidence="4">
    <location>
        <begin position="692"/>
        <end position="702"/>
    </location>
</feature>
<feature type="binding site" evidence="3">
    <location>
        <begin position="397"/>
        <end position="404"/>
    </location>
    <ligand>
        <name>ATP</name>
        <dbReference type="ChEBI" id="CHEBI:30616"/>
    </ligand>
</feature>
<dbReference type="EC" id="3.6.4.12"/>
<dbReference type="EMBL" id="BC064853">
    <property type="protein sequence ID" value="AAH64853.1"/>
    <property type="molecule type" value="mRNA"/>
</dbReference>
<dbReference type="SMR" id="Q6P1V8"/>
<dbReference type="FunCoup" id="Q6P1V8">
    <property type="interactions" value="2102"/>
</dbReference>
<dbReference type="STRING" id="8364.ENSXETP00000048684"/>
<dbReference type="KEGG" id="xtr:395030"/>
<dbReference type="AGR" id="Xenbase:XB-GENE-962678"/>
<dbReference type="CTD" id="4175"/>
<dbReference type="Xenbase" id="XB-GENE-962678">
    <property type="gene designation" value="mcm6"/>
</dbReference>
<dbReference type="InParanoid" id="Q6P1V8"/>
<dbReference type="OMA" id="RHQQTDK"/>
<dbReference type="OrthoDB" id="1744952at2759"/>
<dbReference type="Reactome" id="R-XTR-68867">
    <property type="pathway name" value="Assembly of the pre-replicative complex"/>
</dbReference>
<dbReference type="Reactome" id="R-XTR-68949">
    <property type="pathway name" value="Orc1 removal from chromatin"/>
</dbReference>
<dbReference type="Reactome" id="R-XTR-68962">
    <property type="pathway name" value="Activation of the pre-replicative complex"/>
</dbReference>
<dbReference type="Reactome" id="R-XTR-69052">
    <property type="pathway name" value="Switching of origins to a post-replicative state"/>
</dbReference>
<dbReference type="Proteomes" id="UP000008143">
    <property type="component" value="Chromosome 9"/>
</dbReference>
<dbReference type="GO" id="GO:0042555">
    <property type="term" value="C:MCM complex"/>
    <property type="evidence" value="ECO:0000250"/>
    <property type="project" value="UniProtKB"/>
</dbReference>
<dbReference type="GO" id="GO:0005634">
    <property type="term" value="C:nucleus"/>
    <property type="evidence" value="ECO:0007669"/>
    <property type="project" value="UniProtKB-SubCell"/>
</dbReference>
<dbReference type="GO" id="GO:0005524">
    <property type="term" value="F:ATP binding"/>
    <property type="evidence" value="ECO:0007669"/>
    <property type="project" value="UniProtKB-KW"/>
</dbReference>
<dbReference type="GO" id="GO:0016887">
    <property type="term" value="F:ATP hydrolysis activity"/>
    <property type="evidence" value="ECO:0007669"/>
    <property type="project" value="RHEA"/>
</dbReference>
<dbReference type="GO" id="GO:0003677">
    <property type="term" value="F:DNA binding"/>
    <property type="evidence" value="ECO:0007669"/>
    <property type="project" value="UniProtKB-KW"/>
</dbReference>
<dbReference type="GO" id="GO:0003678">
    <property type="term" value="F:DNA helicase activity"/>
    <property type="evidence" value="ECO:0007669"/>
    <property type="project" value="InterPro"/>
</dbReference>
<dbReference type="GO" id="GO:0008270">
    <property type="term" value="F:zinc ion binding"/>
    <property type="evidence" value="ECO:0007669"/>
    <property type="project" value="UniProtKB-KW"/>
</dbReference>
<dbReference type="GO" id="GO:0006270">
    <property type="term" value="P:DNA replication initiation"/>
    <property type="evidence" value="ECO:0007669"/>
    <property type="project" value="InterPro"/>
</dbReference>
<dbReference type="GO" id="GO:0030174">
    <property type="term" value="P:regulation of DNA-templated DNA replication initiation"/>
    <property type="evidence" value="ECO:0007669"/>
    <property type="project" value="UniProtKB-ARBA"/>
</dbReference>
<dbReference type="CDD" id="cd17757">
    <property type="entry name" value="MCM6"/>
    <property type="match status" value="1"/>
</dbReference>
<dbReference type="FunFam" id="1.20.58.870:FF:000001">
    <property type="entry name" value="DNA helicase"/>
    <property type="match status" value="1"/>
</dbReference>
<dbReference type="FunFam" id="2.20.28.10:FF:000003">
    <property type="entry name" value="DNA helicase"/>
    <property type="match status" value="1"/>
</dbReference>
<dbReference type="FunFam" id="2.40.50.140:FF:000091">
    <property type="entry name" value="DNA helicase"/>
    <property type="match status" value="1"/>
</dbReference>
<dbReference type="FunFam" id="3.30.1640.10:FF:000004">
    <property type="entry name" value="DNA helicase"/>
    <property type="match status" value="1"/>
</dbReference>
<dbReference type="FunFam" id="3.40.50.300:FF:000115">
    <property type="entry name" value="DNA helicase"/>
    <property type="match status" value="1"/>
</dbReference>
<dbReference type="Gene3D" id="1.20.58.870">
    <property type="match status" value="1"/>
</dbReference>
<dbReference type="Gene3D" id="2.20.28.10">
    <property type="match status" value="1"/>
</dbReference>
<dbReference type="Gene3D" id="3.30.1640.10">
    <property type="entry name" value="mini-chromosome maintenance (MCM) complex, chain A, domain 1"/>
    <property type="match status" value="1"/>
</dbReference>
<dbReference type="Gene3D" id="2.40.50.140">
    <property type="entry name" value="Nucleic acid-binding proteins"/>
    <property type="match status" value="1"/>
</dbReference>
<dbReference type="Gene3D" id="3.40.50.300">
    <property type="entry name" value="P-loop containing nucleotide triphosphate hydrolases"/>
    <property type="match status" value="1"/>
</dbReference>
<dbReference type="InterPro" id="IPR031327">
    <property type="entry name" value="MCM"/>
</dbReference>
<dbReference type="InterPro" id="IPR008049">
    <property type="entry name" value="MCM6"/>
</dbReference>
<dbReference type="InterPro" id="IPR041024">
    <property type="entry name" value="Mcm6_C"/>
</dbReference>
<dbReference type="InterPro" id="IPR018525">
    <property type="entry name" value="MCM_CS"/>
</dbReference>
<dbReference type="InterPro" id="IPR001208">
    <property type="entry name" value="MCM_dom"/>
</dbReference>
<dbReference type="InterPro" id="IPR041562">
    <property type="entry name" value="MCM_lid"/>
</dbReference>
<dbReference type="InterPro" id="IPR027925">
    <property type="entry name" value="MCM_N"/>
</dbReference>
<dbReference type="InterPro" id="IPR033762">
    <property type="entry name" value="MCM_OB"/>
</dbReference>
<dbReference type="InterPro" id="IPR012340">
    <property type="entry name" value="NA-bd_OB-fold"/>
</dbReference>
<dbReference type="InterPro" id="IPR027417">
    <property type="entry name" value="P-loop_NTPase"/>
</dbReference>
<dbReference type="PANTHER" id="PTHR11630">
    <property type="entry name" value="DNA REPLICATION LICENSING FACTOR MCM FAMILY MEMBER"/>
    <property type="match status" value="1"/>
</dbReference>
<dbReference type="PANTHER" id="PTHR11630:SF73">
    <property type="entry name" value="DNA REPLICATION LICENSING FACTOR MCM6"/>
    <property type="match status" value="1"/>
</dbReference>
<dbReference type="Pfam" id="PF00493">
    <property type="entry name" value="MCM"/>
    <property type="match status" value="1"/>
</dbReference>
<dbReference type="Pfam" id="PF18263">
    <property type="entry name" value="MCM6_C"/>
    <property type="match status" value="1"/>
</dbReference>
<dbReference type="Pfam" id="PF17855">
    <property type="entry name" value="MCM_lid"/>
    <property type="match status" value="1"/>
</dbReference>
<dbReference type="Pfam" id="PF14551">
    <property type="entry name" value="MCM_N"/>
    <property type="match status" value="1"/>
</dbReference>
<dbReference type="Pfam" id="PF17207">
    <property type="entry name" value="MCM_OB"/>
    <property type="match status" value="1"/>
</dbReference>
<dbReference type="PRINTS" id="PR01657">
    <property type="entry name" value="MCMFAMILY"/>
</dbReference>
<dbReference type="PRINTS" id="PR01662">
    <property type="entry name" value="MCMPROTEIN6"/>
</dbReference>
<dbReference type="SMART" id="SM00350">
    <property type="entry name" value="MCM"/>
    <property type="match status" value="1"/>
</dbReference>
<dbReference type="SUPFAM" id="SSF50249">
    <property type="entry name" value="Nucleic acid-binding proteins"/>
    <property type="match status" value="1"/>
</dbReference>
<dbReference type="SUPFAM" id="SSF52540">
    <property type="entry name" value="P-loop containing nucleoside triphosphate hydrolases"/>
    <property type="match status" value="1"/>
</dbReference>
<dbReference type="PROSITE" id="PS00847">
    <property type="entry name" value="MCM_1"/>
    <property type="match status" value="1"/>
</dbReference>
<dbReference type="PROSITE" id="PS50051">
    <property type="entry name" value="MCM_2"/>
    <property type="match status" value="1"/>
</dbReference>
<keyword id="KW-0067">ATP-binding</keyword>
<keyword id="KW-0131">Cell cycle</keyword>
<keyword id="KW-0235">DNA replication</keyword>
<keyword id="KW-0238">DNA-binding</keyword>
<keyword id="KW-0347">Helicase</keyword>
<keyword id="KW-0378">Hydrolase</keyword>
<keyword id="KW-0479">Metal-binding</keyword>
<keyword id="KW-0547">Nucleotide-binding</keyword>
<keyword id="KW-0539">Nucleus</keyword>
<keyword id="KW-1185">Reference proteome</keyword>
<keyword id="KW-0862">Zinc</keyword>
<keyword id="KW-0863">Zinc-finger</keyword>
<sequence>MDLVDPSQSAAAAAGTQTVKDEVSEKCQKLFQDFLEEFRGSDGELKYQSDAEELIRPERNTLLVSFIDLEQFNQQLATTIQEEFYRVYPYLCRAVKAFARDHGNVPQNKEFYVAFQDLPTRHKIRELTTPRIGSLLRISGQVVRTHPVHPELVSGTFLCLDCQTLVRDVEQQFKYTQPSICRNPVCANRRRFMLDTNKSRFVDFQKVRIQETQAELPRGSIPRSVEVILRAEAVESCQAGDRCDFTGSLIVVPDISQLATPGVRAETSARVGGTEGYQAEGVQGLRALGVRDLSYKLVFLACYVCPTNPRFGGKDLHEEDMTAESIKNQMSVKEWEKVFEMSQDKNLYHNLCTSLFPTVHGNDEVKRGILLMLFGGVPKTTMEGTSLRGDINVCIVGDPSTAKSQFLKHVEEFSPRAVYTSGKASSAAGLTAAVVKDEESHEFVIEAGALMLADNGVCCIDEFDKMDTKDQVAIHEAMEQQTISITKAGVKATLNARTSILAAANPVGGRYDRAKSLKQNINLSAPIMSRFDLFFILVDECNEVTDYAIARRIVDLHSRIEESIDRVYTLDEVRRYLLFARQFKPKISKESEDFIVEQYKRLRQRDGTGVTKSAWRITVRQLESMIRLSEGMARMHCSDEVQPKHVKEAFRLLNKSIIRVETPDVNLDQEDEHEAEEEPQEVINGDASVPSGVNGHVNGMNGHAEEPNAATPKPSLRLNFAEYKRISNLLVLQLRKMEDEDETSQRKSELINWYLKEIESEIDSEEELVTRKQIIDKVVHRLVHYDQILIELTQTGLKGTGDEEVPKEEDPYLVVNPNYILED</sequence>
<name>MCM6Z_XENTR</name>
<comment type="function">
    <text evidence="1">Acts as a component of the mcm2-7 complex (mcm complex) which is the putative replicative helicase essential for 'once per cell cycle' DNA replication initiation and elongation in eukaryotic cells. The active ATPase sites in the mcm2-7 ring are formed through the interaction surfaces of two neighboring subunits such that a critical structure of a conserved arginine finger motif is provided in trans relative to the ATP-binding site of the Walker A box of the adjacent subunit. The six ATPase active sites, however, are likely to contribute differentially to the complex helicase activity. The existence of maternal and zygotic forms of mcm3 and mcm6 suggests that specific forms of mcm2-7 complexes may be used during different stages of development. May replace mmcm6 in the mcm2-7 complex (By similarity).</text>
</comment>
<comment type="catalytic activity">
    <reaction>
        <text>ATP + H2O = ADP + phosphate + H(+)</text>
        <dbReference type="Rhea" id="RHEA:13065"/>
        <dbReference type="ChEBI" id="CHEBI:15377"/>
        <dbReference type="ChEBI" id="CHEBI:15378"/>
        <dbReference type="ChEBI" id="CHEBI:30616"/>
        <dbReference type="ChEBI" id="CHEBI:43474"/>
        <dbReference type="ChEBI" id="CHEBI:456216"/>
        <dbReference type="EC" id="3.6.4.12"/>
    </reaction>
</comment>
<comment type="subunit">
    <text evidence="1">Component of the mcm2-7 complex (RLF-M). The complex forms a toroidal hexameric ring with the proposed subunit order mcm2-mcm6-mcm4-mcm7-mcm3-mcm5. Begins to associate with zmcm3, mcm4 and mcm7 into mcm complexes at the neurula stage (By similarity).</text>
</comment>
<comment type="subcellular location">
    <subcellularLocation>
        <location evidence="1">Nucleus</location>
    </subcellularLocation>
    <text evidence="1">Associated with chromatin before the formation of nuclei and detaches from it as DNA replication progresses.</text>
</comment>
<comment type="similarity">
    <text evidence="3">Belongs to the MCM family.</text>
</comment>
<reference evidence="5" key="1">
    <citation type="submission" date="2004-01" db="EMBL/GenBank/DDBJ databases">
        <authorList>
            <consortium name="NIH - Xenopus Gene Collection (XGC) project"/>
        </authorList>
    </citation>
    <scope>NUCLEOTIDE SEQUENCE [LARGE SCALE MRNA]</scope>
    <source>
        <tissue evidence="5">Embryo</tissue>
    </source>
</reference>
<gene>
    <name evidence="2" type="primary">zmcm6</name>
</gene>
<protein>
    <recommendedName>
        <fullName>Zygotic DNA replication licensing factor mcm6</fullName>
        <ecNumber>3.6.4.12</ecNumber>
    </recommendedName>
    <alternativeName>
        <fullName>Zygotic minichromosome maintenance protein 6</fullName>
        <shortName>zMCM6</shortName>
    </alternativeName>
</protein>
<evidence type="ECO:0000250" key="1"/>
<evidence type="ECO:0000250" key="2">
    <source>
        <dbReference type="UniProtKB" id="Q498J7"/>
    </source>
</evidence>
<evidence type="ECO:0000255" key="3"/>
<evidence type="ECO:0000256" key="4">
    <source>
        <dbReference type="SAM" id="MobiDB-lite"/>
    </source>
</evidence>
<evidence type="ECO:0000312" key="5">
    <source>
        <dbReference type="EMBL" id="AAH64853.1"/>
    </source>
</evidence>
<proteinExistence type="evidence at transcript level"/>